<protein>
    <recommendedName>
        <fullName evidence="1">Large ribosomal subunit protein uL15</fullName>
    </recommendedName>
    <alternativeName>
        <fullName evidence="3">50S ribosomal protein L15</fullName>
    </alternativeName>
</protein>
<gene>
    <name evidence="1" type="primary">rplO</name>
    <name type="ordered locus">DIP0529</name>
</gene>
<accession>Q6NJ83</accession>
<proteinExistence type="inferred from homology"/>
<comment type="function">
    <text evidence="1">Binds to the 23S rRNA.</text>
</comment>
<comment type="subunit">
    <text evidence="1">Part of the 50S ribosomal subunit.</text>
</comment>
<comment type="similarity">
    <text evidence="1">Belongs to the universal ribosomal protein uL15 family.</text>
</comment>
<organism>
    <name type="scientific">Corynebacterium diphtheriae (strain ATCC 700971 / NCTC 13129 / Biotype gravis)</name>
    <dbReference type="NCBI Taxonomy" id="257309"/>
    <lineage>
        <taxon>Bacteria</taxon>
        <taxon>Bacillati</taxon>
        <taxon>Actinomycetota</taxon>
        <taxon>Actinomycetes</taxon>
        <taxon>Mycobacteriales</taxon>
        <taxon>Corynebacteriaceae</taxon>
        <taxon>Corynebacterium</taxon>
    </lineage>
</organism>
<reference key="1">
    <citation type="journal article" date="2003" name="Nucleic Acids Res.">
        <title>The complete genome sequence and analysis of Corynebacterium diphtheriae NCTC13129.</title>
        <authorList>
            <person name="Cerdeno-Tarraga A.-M."/>
            <person name="Efstratiou A."/>
            <person name="Dover L.G."/>
            <person name="Holden M.T.G."/>
            <person name="Pallen M.J."/>
            <person name="Bentley S.D."/>
            <person name="Besra G.S."/>
            <person name="Churcher C.M."/>
            <person name="James K.D."/>
            <person name="De Zoysa A."/>
            <person name="Chillingworth T."/>
            <person name="Cronin A."/>
            <person name="Dowd L."/>
            <person name="Feltwell T."/>
            <person name="Hamlin N."/>
            <person name="Holroyd S."/>
            <person name="Jagels K."/>
            <person name="Moule S."/>
            <person name="Quail M.A."/>
            <person name="Rabbinowitsch E."/>
            <person name="Rutherford K.M."/>
            <person name="Thomson N.R."/>
            <person name="Unwin L."/>
            <person name="Whitehead S."/>
            <person name="Barrell B.G."/>
            <person name="Parkhill J."/>
        </authorList>
    </citation>
    <scope>NUCLEOTIDE SEQUENCE [LARGE SCALE GENOMIC DNA]</scope>
    <source>
        <strain>ATCC 700971 / NCTC 13129 / Biotype gravis</strain>
    </source>
</reference>
<evidence type="ECO:0000255" key="1">
    <source>
        <dbReference type="HAMAP-Rule" id="MF_01341"/>
    </source>
</evidence>
<evidence type="ECO:0000256" key="2">
    <source>
        <dbReference type="SAM" id="MobiDB-lite"/>
    </source>
</evidence>
<evidence type="ECO:0000305" key="3"/>
<dbReference type="EMBL" id="BX248355">
    <property type="protein sequence ID" value="CAE49040.1"/>
    <property type="molecule type" value="Genomic_DNA"/>
</dbReference>
<dbReference type="RefSeq" id="WP_010934358.1">
    <property type="nucleotide sequence ID" value="NC_002935.2"/>
</dbReference>
<dbReference type="SMR" id="Q6NJ83"/>
<dbReference type="STRING" id="257309.DIP0529"/>
<dbReference type="KEGG" id="cdi:DIP0529"/>
<dbReference type="HOGENOM" id="CLU_055188_4_1_11"/>
<dbReference type="Proteomes" id="UP000002198">
    <property type="component" value="Chromosome"/>
</dbReference>
<dbReference type="GO" id="GO:0022625">
    <property type="term" value="C:cytosolic large ribosomal subunit"/>
    <property type="evidence" value="ECO:0007669"/>
    <property type="project" value="TreeGrafter"/>
</dbReference>
<dbReference type="GO" id="GO:0019843">
    <property type="term" value="F:rRNA binding"/>
    <property type="evidence" value="ECO:0007669"/>
    <property type="project" value="UniProtKB-UniRule"/>
</dbReference>
<dbReference type="GO" id="GO:0003735">
    <property type="term" value="F:structural constituent of ribosome"/>
    <property type="evidence" value="ECO:0007669"/>
    <property type="project" value="InterPro"/>
</dbReference>
<dbReference type="GO" id="GO:0006412">
    <property type="term" value="P:translation"/>
    <property type="evidence" value="ECO:0007669"/>
    <property type="project" value="UniProtKB-UniRule"/>
</dbReference>
<dbReference type="FunFam" id="3.100.10.10:FF:000005">
    <property type="entry name" value="50S ribosomal protein L15"/>
    <property type="match status" value="1"/>
</dbReference>
<dbReference type="Gene3D" id="3.100.10.10">
    <property type="match status" value="1"/>
</dbReference>
<dbReference type="HAMAP" id="MF_01341">
    <property type="entry name" value="Ribosomal_uL15"/>
    <property type="match status" value="1"/>
</dbReference>
<dbReference type="InterPro" id="IPR030878">
    <property type="entry name" value="Ribosomal_uL15"/>
</dbReference>
<dbReference type="InterPro" id="IPR021131">
    <property type="entry name" value="Ribosomal_uL15/eL18"/>
</dbReference>
<dbReference type="InterPro" id="IPR036227">
    <property type="entry name" value="Ribosomal_uL15/eL18_sf"/>
</dbReference>
<dbReference type="InterPro" id="IPR005749">
    <property type="entry name" value="Ribosomal_uL15_bac-type"/>
</dbReference>
<dbReference type="InterPro" id="IPR001196">
    <property type="entry name" value="Ribosomal_uL15_CS"/>
</dbReference>
<dbReference type="NCBIfam" id="TIGR01071">
    <property type="entry name" value="rplO_bact"/>
    <property type="match status" value="1"/>
</dbReference>
<dbReference type="PANTHER" id="PTHR12934">
    <property type="entry name" value="50S RIBOSOMAL PROTEIN L15"/>
    <property type="match status" value="1"/>
</dbReference>
<dbReference type="PANTHER" id="PTHR12934:SF11">
    <property type="entry name" value="LARGE RIBOSOMAL SUBUNIT PROTEIN UL15M"/>
    <property type="match status" value="1"/>
</dbReference>
<dbReference type="Pfam" id="PF00828">
    <property type="entry name" value="Ribosomal_L27A"/>
    <property type="match status" value="1"/>
</dbReference>
<dbReference type="SUPFAM" id="SSF52080">
    <property type="entry name" value="Ribosomal proteins L15p and L18e"/>
    <property type="match status" value="1"/>
</dbReference>
<dbReference type="PROSITE" id="PS00475">
    <property type="entry name" value="RIBOSOMAL_L15"/>
    <property type="match status" value="1"/>
</dbReference>
<sequence>MSEPIKLHDLRPAKGANKPKTRVGRGEASKGKTAGRGTKGTKARKQVSAAFEGGQMPLHMRLPKLKGFKNPAKVYYQVVNVSDLEKAFPQGGEIAVADIVAKGLVRPKQPVKVLGNGEISVKLNVTATKFSKSAVEKIEAAGGSVTEA</sequence>
<keyword id="KW-1185">Reference proteome</keyword>
<keyword id="KW-0687">Ribonucleoprotein</keyword>
<keyword id="KW-0689">Ribosomal protein</keyword>
<keyword id="KW-0694">RNA-binding</keyword>
<keyword id="KW-0699">rRNA-binding</keyword>
<feature type="chain" id="PRO_0000104709" description="Large ribosomal subunit protein uL15">
    <location>
        <begin position="1"/>
        <end position="148"/>
    </location>
</feature>
<feature type="region of interest" description="Disordered" evidence="2">
    <location>
        <begin position="1"/>
        <end position="52"/>
    </location>
</feature>
<feature type="compositionally biased region" description="Basic and acidic residues" evidence="2">
    <location>
        <begin position="1"/>
        <end position="12"/>
    </location>
</feature>
<name>RL15_CORDI</name>